<protein>
    <recommendedName>
        <fullName evidence="1">Large ribosomal subunit protein bL33B</fullName>
    </recommendedName>
    <alternativeName>
        <fullName>50S ribosomal protein L33 3</fullName>
    </alternativeName>
</protein>
<feature type="chain" id="PRO_0000170174" description="Large ribosomal subunit protein bL33B">
    <location>
        <begin position="1"/>
        <end position="49"/>
    </location>
</feature>
<accession>P0A490</accession>
<accession>O34102</accession>
<sequence>MRVNITLEHKESGERLYLTQKNKRNTPDKLELKKYSKKLRKHVIFKEVK</sequence>
<gene>
    <name type="primary">rpmG2</name>
    <name type="synonym">rpmG</name>
    <name type="synonym">rpmGB</name>
</gene>
<dbReference type="EMBL" id="U89998">
    <property type="protein sequence ID" value="AAB66692.1"/>
    <property type="molecule type" value="Genomic_DNA"/>
</dbReference>
<dbReference type="RefSeq" id="WP_003132258.1">
    <property type="nucleotide sequence ID" value="NZ_WJUX01000018.1"/>
</dbReference>
<dbReference type="SMR" id="P0A490"/>
<dbReference type="GeneID" id="89632238"/>
<dbReference type="GO" id="GO:0005737">
    <property type="term" value="C:cytoplasm"/>
    <property type="evidence" value="ECO:0007669"/>
    <property type="project" value="UniProtKB-ARBA"/>
</dbReference>
<dbReference type="GO" id="GO:1990904">
    <property type="term" value="C:ribonucleoprotein complex"/>
    <property type="evidence" value="ECO:0007669"/>
    <property type="project" value="UniProtKB-KW"/>
</dbReference>
<dbReference type="GO" id="GO:0005840">
    <property type="term" value="C:ribosome"/>
    <property type="evidence" value="ECO:0007669"/>
    <property type="project" value="UniProtKB-KW"/>
</dbReference>
<dbReference type="GO" id="GO:0003735">
    <property type="term" value="F:structural constituent of ribosome"/>
    <property type="evidence" value="ECO:0007669"/>
    <property type="project" value="InterPro"/>
</dbReference>
<dbReference type="GO" id="GO:0006412">
    <property type="term" value="P:translation"/>
    <property type="evidence" value="ECO:0007669"/>
    <property type="project" value="UniProtKB-UniRule"/>
</dbReference>
<dbReference type="Gene3D" id="2.20.28.120">
    <property type="entry name" value="Ribosomal protein L33"/>
    <property type="match status" value="1"/>
</dbReference>
<dbReference type="HAMAP" id="MF_00294">
    <property type="entry name" value="Ribosomal_bL33"/>
    <property type="match status" value="1"/>
</dbReference>
<dbReference type="InterPro" id="IPR001705">
    <property type="entry name" value="Ribosomal_bL33"/>
</dbReference>
<dbReference type="InterPro" id="IPR018264">
    <property type="entry name" value="Ribosomal_bL33_CS"/>
</dbReference>
<dbReference type="InterPro" id="IPR038584">
    <property type="entry name" value="Ribosomal_bL33_sf"/>
</dbReference>
<dbReference type="InterPro" id="IPR011332">
    <property type="entry name" value="Ribosomal_zn-bd"/>
</dbReference>
<dbReference type="NCBIfam" id="NF001764">
    <property type="entry name" value="PRK00504.1"/>
    <property type="match status" value="1"/>
</dbReference>
<dbReference type="NCBIfam" id="NF001860">
    <property type="entry name" value="PRK00595.1"/>
    <property type="match status" value="1"/>
</dbReference>
<dbReference type="NCBIfam" id="TIGR01023">
    <property type="entry name" value="rpmG_bact"/>
    <property type="match status" value="1"/>
</dbReference>
<dbReference type="PANTHER" id="PTHR43168">
    <property type="entry name" value="50S RIBOSOMAL PROTEIN L33, CHLOROPLASTIC"/>
    <property type="match status" value="1"/>
</dbReference>
<dbReference type="PANTHER" id="PTHR43168:SF2">
    <property type="entry name" value="LARGE RIBOSOMAL SUBUNIT PROTEIN BL33C"/>
    <property type="match status" value="1"/>
</dbReference>
<dbReference type="Pfam" id="PF00471">
    <property type="entry name" value="Ribosomal_L33"/>
    <property type="match status" value="1"/>
</dbReference>
<dbReference type="SUPFAM" id="SSF57829">
    <property type="entry name" value="Zn-binding ribosomal proteins"/>
    <property type="match status" value="1"/>
</dbReference>
<dbReference type="PROSITE" id="PS00582">
    <property type="entry name" value="RIBOSOMAL_L33"/>
    <property type="match status" value="1"/>
</dbReference>
<name>RL332_LACLC</name>
<evidence type="ECO:0000255" key="1">
    <source>
        <dbReference type="HAMAP-Rule" id="MF_00294"/>
    </source>
</evidence>
<evidence type="ECO:0000305" key="2"/>
<reference key="1">
    <citation type="journal article" date="1997" name="Microbiology">
        <title>Molecular characterization of the restriction endonuclease gene (scrFIR) associated with the ScrFI restriction/modification system from Lactococcus lactis subsp. cremoris UC503.</title>
        <authorList>
            <person name="Twomey D.P."/>
            <person name="Gabillet N."/>
            <person name="Daly C."/>
            <person name="Fitzgerald G.F."/>
        </authorList>
    </citation>
    <scope>NUCLEOTIDE SEQUENCE [GENOMIC DNA]</scope>
    <source>
        <strain>UC503</strain>
    </source>
</reference>
<keyword id="KW-0687">Ribonucleoprotein</keyword>
<keyword id="KW-0689">Ribosomal protein</keyword>
<organism>
    <name type="scientific">Lactococcus lactis subsp. cremoris</name>
    <name type="common">Streptococcus cremoris</name>
    <dbReference type="NCBI Taxonomy" id="1359"/>
    <lineage>
        <taxon>Bacteria</taxon>
        <taxon>Bacillati</taxon>
        <taxon>Bacillota</taxon>
        <taxon>Bacilli</taxon>
        <taxon>Lactobacillales</taxon>
        <taxon>Streptococcaceae</taxon>
        <taxon>Lactococcus</taxon>
    </lineage>
</organism>
<comment type="similarity">
    <text evidence="2">Belongs to the bacterial ribosomal protein bL33 family.</text>
</comment>
<proteinExistence type="inferred from homology"/>